<organism>
    <name type="scientific">Caldicellulosiruptor bescii (strain ATCC BAA-1888 / DSM 6725 / KCTC 15123 / Z-1320)</name>
    <name type="common">Anaerocellum thermophilum</name>
    <dbReference type="NCBI Taxonomy" id="521460"/>
    <lineage>
        <taxon>Bacteria</taxon>
        <taxon>Bacillati</taxon>
        <taxon>Bacillota</taxon>
        <taxon>Bacillota incertae sedis</taxon>
        <taxon>Caldicellulosiruptorales</taxon>
        <taxon>Caldicellulosiruptoraceae</taxon>
        <taxon>Caldicellulosiruptor</taxon>
    </lineage>
</organism>
<accession>B9MM59</accession>
<reference key="1">
    <citation type="submission" date="2009-01" db="EMBL/GenBank/DDBJ databases">
        <title>Complete sequence of chromosome of Caldicellulosiruptor becscii DSM 6725.</title>
        <authorList>
            <person name="Lucas S."/>
            <person name="Copeland A."/>
            <person name="Lapidus A."/>
            <person name="Glavina del Rio T."/>
            <person name="Tice H."/>
            <person name="Bruce D."/>
            <person name="Goodwin L."/>
            <person name="Pitluck S."/>
            <person name="Sims D."/>
            <person name="Meincke L."/>
            <person name="Brettin T."/>
            <person name="Detter J.C."/>
            <person name="Han C."/>
            <person name="Larimer F."/>
            <person name="Land M."/>
            <person name="Hauser L."/>
            <person name="Kyrpides N."/>
            <person name="Ovchinnikova G."/>
            <person name="Kataeva I."/>
            <person name="Adams M.W.W."/>
        </authorList>
    </citation>
    <scope>NUCLEOTIDE SEQUENCE [LARGE SCALE GENOMIC DNA]</scope>
    <source>
        <strain>ATCC BAA-1888 / DSM 6725 / KCTC 15123 / Z-1320</strain>
    </source>
</reference>
<feature type="chain" id="PRO_1000185243" description="Formate--tetrahydrofolate ligase">
    <location>
        <begin position="1"/>
        <end position="552"/>
    </location>
</feature>
<feature type="binding site" evidence="1">
    <location>
        <begin position="63"/>
        <end position="70"/>
    </location>
    <ligand>
        <name>ATP</name>
        <dbReference type="ChEBI" id="CHEBI:30616"/>
    </ligand>
</feature>
<name>FTHS_CALBD</name>
<comment type="catalytic activity">
    <reaction evidence="1">
        <text>(6S)-5,6,7,8-tetrahydrofolate + formate + ATP = (6R)-10-formyltetrahydrofolate + ADP + phosphate</text>
        <dbReference type="Rhea" id="RHEA:20221"/>
        <dbReference type="ChEBI" id="CHEBI:15740"/>
        <dbReference type="ChEBI" id="CHEBI:30616"/>
        <dbReference type="ChEBI" id="CHEBI:43474"/>
        <dbReference type="ChEBI" id="CHEBI:57453"/>
        <dbReference type="ChEBI" id="CHEBI:195366"/>
        <dbReference type="ChEBI" id="CHEBI:456216"/>
        <dbReference type="EC" id="6.3.4.3"/>
    </reaction>
</comment>
<comment type="pathway">
    <text evidence="1">One-carbon metabolism; tetrahydrofolate interconversion.</text>
</comment>
<comment type="similarity">
    <text evidence="1">Belongs to the formate--tetrahydrofolate ligase family.</text>
</comment>
<keyword id="KW-0067">ATP-binding</keyword>
<keyword id="KW-0436">Ligase</keyword>
<keyword id="KW-0547">Nucleotide-binding</keyword>
<keyword id="KW-0554">One-carbon metabolism</keyword>
<dbReference type="EC" id="6.3.4.3" evidence="1"/>
<dbReference type="EMBL" id="CP001393">
    <property type="protein sequence ID" value="ACM61282.1"/>
    <property type="molecule type" value="Genomic_DNA"/>
</dbReference>
<dbReference type="RefSeq" id="WP_015908543.1">
    <property type="nucleotide sequence ID" value="NC_012034.1"/>
</dbReference>
<dbReference type="SMR" id="B9MM59"/>
<dbReference type="STRING" id="521460.Athe_2208"/>
<dbReference type="GeneID" id="31773560"/>
<dbReference type="KEGG" id="ate:Athe_2208"/>
<dbReference type="eggNOG" id="COG2759">
    <property type="taxonomic scope" value="Bacteria"/>
</dbReference>
<dbReference type="HOGENOM" id="CLU_003601_3_3_9"/>
<dbReference type="UniPathway" id="UPA00193"/>
<dbReference type="Proteomes" id="UP000007723">
    <property type="component" value="Chromosome"/>
</dbReference>
<dbReference type="GO" id="GO:0005524">
    <property type="term" value="F:ATP binding"/>
    <property type="evidence" value="ECO:0007669"/>
    <property type="project" value="UniProtKB-UniRule"/>
</dbReference>
<dbReference type="GO" id="GO:0004329">
    <property type="term" value="F:formate-tetrahydrofolate ligase activity"/>
    <property type="evidence" value="ECO:0007669"/>
    <property type="project" value="UniProtKB-UniRule"/>
</dbReference>
<dbReference type="GO" id="GO:0035999">
    <property type="term" value="P:tetrahydrofolate interconversion"/>
    <property type="evidence" value="ECO:0007669"/>
    <property type="project" value="UniProtKB-UniRule"/>
</dbReference>
<dbReference type="CDD" id="cd00477">
    <property type="entry name" value="FTHFS"/>
    <property type="match status" value="1"/>
</dbReference>
<dbReference type="FunFam" id="3.30.1510.10:FF:000001">
    <property type="entry name" value="Formate--tetrahydrofolate ligase"/>
    <property type="match status" value="1"/>
</dbReference>
<dbReference type="FunFam" id="3.10.410.10:FF:000001">
    <property type="entry name" value="Putative formate--tetrahydrofolate ligase"/>
    <property type="match status" value="1"/>
</dbReference>
<dbReference type="Gene3D" id="3.30.1510.10">
    <property type="entry name" value="Domain 2, N(10)-formyltetrahydrofolate synthetase"/>
    <property type="match status" value="1"/>
</dbReference>
<dbReference type="Gene3D" id="3.10.410.10">
    <property type="entry name" value="Formyltetrahydrofolate synthetase, domain 3"/>
    <property type="match status" value="1"/>
</dbReference>
<dbReference type="Gene3D" id="3.40.50.300">
    <property type="entry name" value="P-loop containing nucleotide triphosphate hydrolases"/>
    <property type="match status" value="1"/>
</dbReference>
<dbReference type="HAMAP" id="MF_01543">
    <property type="entry name" value="FTHFS"/>
    <property type="match status" value="1"/>
</dbReference>
<dbReference type="InterPro" id="IPR000559">
    <property type="entry name" value="Formate_THF_ligase"/>
</dbReference>
<dbReference type="InterPro" id="IPR027417">
    <property type="entry name" value="P-loop_NTPase"/>
</dbReference>
<dbReference type="NCBIfam" id="NF010030">
    <property type="entry name" value="PRK13505.1"/>
    <property type="match status" value="1"/>
</dbReference>
<dbReference type="Pfam" id="PF01268">
    <property type="entry name" value="FTHFS"/>
    <property type="match status" value="1"/>
</dbReference>
<dbReference type="SUPFAM" id="SSF52540">
    <property type="entry name" value="P-loop containing nucleoside triphosphate hydrolases"/>
    <property type="match status" value="1"/>
</dbReference>
<protein>
    <recommendedName>
        <fullName evidence="1">Formate--tetrahydrofolate ligase</fullName>
        <ecNumber evidence="1">6.3.4.3</ecNumber>
    </recommendedName>
    <alternativeName>
        <fullName evidence="1">Formyltetrahydrofolate synthetase</fullName>
        <shortName evidence="1">FHS</shortName>
        <shortName evidence="1">FTHFS</shortName>
    </alternativeName>
</protein>
<gene>
    <name evidence="1" type="primary">fhs</name>
    <name type="ordered locus">Athe_2208</name>
</gene>
<evidence type="ECO:0000255" key="1">
    <source>
        <dbReference type="HAMAP-Rule" id="MF_01543"/>
    </source>
</evidence>
<sequence>MKSISKVEEVLEPISKIAEKIGLDEDEIELYGKYKAKISLDILKKKAQLQEGKVILVTSINPTPFGEGKTTTAIGLSMAINRLGFKSIVTLREPSLGPFLGLKGGATGGGASQILPSIDINLHFTGDIHAVTSANNLLCAAVDNHIYHGNRLGINPKSITIKRAMDMNDRSLRHIIVGLSNDQKGAIREDGFVISVASEVMAVLCLSMSYDDLKEKLGNILVGFTYDKKPVYAKDLNVHGSMALLLKDALKPNLVQTSENTAAIVHGGPFANIAHGTNSIVATKIAQKLSEYVVVEAGFGSDLGAEKFINIVARKSGIYPQAAVLVVTVKALKHHAKIEENSGLQSGVNSIQQGLENLEKHIENLKVMGLETVVALNKFPDDKDEEIELIRSFCEEMGVEFSVSSAYTHGSEGVLELAEKVIRLSDKRKRINFVYQDSDFIEEKIKKVATIIYGAKDVKFSKAALSKLELIKNLKVEHFPICMSKTQYSLSDDPKLLGKPKDFILNVTDIEIKNGAGFIVVMCGDIIAMPGLGKDFAALHLDIDSSGNPIFK</sequence>
<proteinExistence type="inferred from homology"/>